<evidence type="ECO:0000250" key="1">
    <source>
        <dbReference type="UniProtKB" id="Q96EE3"/>
    </source>
</evidence>
<evidence type="ECO:0000305" key="2"/>
<accession>Q5U4Y8</accession>
<dbReference type="EMBL" id="CR855721">
    <property type="protein sequence ID" value="CAJ82514.1"/>
    <property type="molecule type" value="mRNA"/>
</dbReference>
<dbReference type="EMBL" id="BC084902">
    <property type="protein sequence ID" value="AAH84902.1"/>
    <property type="molecule type" value="mRNA"/>
</dbReference>
<dbReference type="RefSeq" id="NP_001011152.1">
    <property type="nucleotide sequence ID" value="NM_001011152.2"/>
</dbReference>
<dbReference type="SMR" id="Q5U4Y8"/>
<dbReference type="FunCoup" id="Q5U4Y8">
    <property type="interactions" value="3092"/>
</dbReference>
<dbReference type="STRING" id="8364.ENSXETP00000017169"/>
<dbReference type="PaxDb" id="8364-ENSXETP00000055056"/>
<dbReference type="DNASU" id="496570"/>
<dbReference type="GeneID" id="496570"/>
<dbReference type="KEGG" id="xtr:496570"/>
<dbReference type="AGR" id="Xenbase:XB-GENE-1015661"/>
<dbReference type="CTD" id="81929"/>
<dbReference type="Xenbase" id="XB-GENE-1015661">
    <property type="gene designation" value="seh1l"/>
</dbReference>
<dbReference type="eggNOG" id="KOG2445">
    <property type="taxonomic scope" value="Eukaryota"/>
</dbReference>
<dbReference type="HOGENOM" id="CLU_032441_1_2_1"/>
<dbReference type="InParanoid" id="Q5U4Y8"/>
<dbReference type="OrthoDB" id="364224at2759"/>
<dbReference type="TreeFam" id="TF105924"/>
<dbReference type="Reactome" id="R-XTR-141444">
    <property type="pathway name" value="Amplification of signal from unattached kinetochores via a MAD2 inhibitory signal"/>
</dbReference>
<dbReference type="Reactome" id="R-XTR-170822">
    <property type="pathway name" value="Regulation of Glucokinase by Glucokinase Regulatory Protein"/>
</dbReference>
<dbReference type="Reactome" id="R-XTR-2467813">
    <property type="pathway name" value="Separation of Sister Chromatids"/>
</dbReference>
<dbReference type="Reactome" id="R-XTR-2500257">
    <property type="pathway name" value="Resolution of Sister Chromatid Cohesion"/>
</dbReference>
<dbReference type="Reactome" id="R-XTR-3108214">
    <property type="pathway name" value="SUMOylation of DNA damage response and repair proteins"/>
</dbReference>
<dbReference type="Reactome" id="R-XTR-3232142">
    <property type="pathway name" value="SUMOylation of ubiquitinylation proteins"/>
</dbReference>
<dbReference type="Reactome" id="R-XTR-3301854">
    <property type="pathway name" value="Nuclear Pore Complex (NPC) Disassembly"/>
</dbReference>
<dbReference type="Reactome" id="R-XTR-3371453">
    <property type="pathway name" value="Regulation of HSF1-mediated heat shock response"/>
</dbReference>
<dbReference type="Reactome" id="R-XTR-4085377">
    <property type="pathway name" value="SUMOylation of SUMOylation proteins"/>
</dbReference>
<dbReference type="Reactome" id="R-XTR-4570464">
    <property type="pathway name" value="SUMOylation of RNA binding proteins"/>
</dbReference>
<dbReference type="Reactome" id="R-XTR-4615885">
    <property type="pathway name" value="SUMOylation of DNA replication proteins"/>
</dbReference>
<dbReference type="Reactome" id="R-XTR-5663220">
    <property type="pathway name" value="RHO GTPases Activate Formins"/>
</dbReference>
<dbReference type="Reactome" id="R-XTR-68877">
    <property type="pathway name" value="Mitotic Prometaphase"/>
</dbReference>
<dbReference type="Reactome" id="R-XTR-9615933">
    <property type="pathway name" value="Postmitotic nuclear pore complex (NPC) reformation"/>
</dbReference>
<dbReference type="Reactome" id="R-XTR-9639288">
    <property type="pathway name" value="Amino acids regulate mTORC1"/>
</dbReference>
<dbReference type="Reactome" id="R-XTR-9648025">
    <property type="pathway name" value="EML4 and NUDC in mitotic spindle formation"/>
</dbReference>
<dbReference type="Proteomes" id="UP000008143">
    <property type="component" value="Chromosome 6"/>
</dbReference>
<dbReference type="Bgee" id="ENSXETG00000019668">
    <property type="expression patterns" value="Expressed in ovary and 12 other cell types or tissues"/>
</dbReference>
<dbReference type="ExpressionAtlas" id="Q5U4Y8">
    <property type="expression patterns" value="baseline"/>
</dbReference>
<dbReference type="GO" id="GO:0061700">
    <property type="term" value="C:GATOR2 complex"/>
    <property type="evidence" value="ECO:0000250"/>
    <property type="project" value="UniProtKB"/>
</dbReference>
<dbReference type="GO" id="GO:0000776">
    <property type="term" value="C:kinetochore"/>
    <property type="evidence" value="ECO:0007669"/>
    <property type="project" value="UniProtKB-KW"/>
</dbReference>
<dbReference type="GO" id="GO:0005765">
    <property type="term" value="C:lysosomal membrane"/>
    <property type="evidence" value="ECO:0000250"/>
    <property type="project" value="UniProtKB"/>
</dbReference>
<dbReference type="GO" id="GO:0031080">
    <property type="term" value="C:nuclear pore outer ring"/>
    <property type="evidence" value="ECO:0000250"/>
    <property type="project" value="UniProtKB"/>
</dbReference>
<dbReference type="GO" id="GO:0005198">
    <property type="term" value="F:structural molecule activity"/>
    <property type="evidence" value="ECO:0007669"/>
    <property type="project" value="InterPro"/>
</dbReference>
<dbReference type="GO" id="GO:0051315">
    <property type="term" value="P:attachment of mitotic spindle microtubules to kinetochore"/>
    <property type="evidence" value="ECO:0000250"/>
    <property type="project" value="UniProtKB"/>
</dbReference>
<dbReference type="GO" id="GO:0051301">
    <property type="term" value="P:cell division"/>
    <property type="evidence" value="ECO:0007669"/>
    <property type="project" value="UniProtKB-KW"/>
</dbReference>
<dbReference type="GO" id="GO:0031669">
    <property type="term" value="P:cellular response to nutrient levels"/>
    <property type="evidence" value="ECO:0000250"/>
    <property type="project" value="UniProtKB"/>
</dbReference>
<dbReference type="GO" id="GO:0007080">
    <property type="term" value="P:mitotic metaphase chromosome alignment"/>
    <property type="evidence" value="ECO:0000250"/>
    <property type="project" value="UniProtKB"/>
</dbReference>
<dbReference type="GO" id="GO:0051028">
    <property type="term" value="P:mRNA transport"/>
    <property type="evidence" value="ECO:0007669"/>
    <property type="project" value="UniProtKB-KW"/>
</dbReference>
<dbReference type="GO" id="GO:0006999">
    <property type="term" value="P:nuclear pore organization"/>
    <property type="evidence" value="ECO:0000250"/>
    <property type="project" value="UniProtKB"/>
</dbReference>
<dbReference type="GO" id="GO:1904263">
    <property type="term" value="P:positive regulation of TORC1 signaling"/>
    <property type="evidence" value="ECO:0000250"/>
    <property type="project" value="UniProtKB"/>
</dbReference>
<dbReference type="GO" id="GO:0015031">
    <property type="term" value="P:protein transport"/>
    <property type="evidence" value="ECO:0007669"/>
    <property type="project" value="UniProtKB-KW"/>
</dbReference>
<dbReference type="FunFam" id="2.130.10.10:FF:000063">
    <property type="entry name" value="SEH1 like nucleoporin"/>
    <property type="match status" value="1"/>
</dbReference>
<dbReference type="Gene3D" id="2.130.10.10">
    <property type="entry name" value="YVTN repeat-like/Quinoprotein amine dehydrogenase"/>
    <property type="match status" value="1"/>
</dbReference>
<dbReference type="InterPro" id="IPR020472">
    <property type="entry name" value="G-protein_beta_WD-40_rep"/>
</dbReference>
<dbReference type="InterPro" id="IPR037363">
    <property type="entry name" value="Sec13/Seh1_fam"/>
</dbReference>
<dbReference type="InterPro" id="IPR015943">
    <property type="entry name" value="WD40/YVTN_repeat-like_dom_sf"/>
</dbReference>
<dbReference type="InterPro" id="IPR036322">
    <property type="entry name" value="WD40_repeat_dom_sf"/>
</dbReference>
<dbReference type="InterPro" id="IPR001680">
    <property type="entry name" value="WD40_rpt"/>
</dbReference>
<dbReference type="PANTHER" id="PTHR11024">
    <property type="entry name" value="NUCLEAR PORE COMPLEX PROTEIN SEC13 / SEH1 FAMILY MEMBER"/>
    <property type="match status" value="1"/>
</dbReference>
<dbReference type="PANTHER" id="PTHR11024:SF3">
    <property type="entry name" value="NUCLEOPORIN SEH1"/>
    <property type="match status" value="1"/>
</dbReference>
<dbReference type="Pfam" id="PF00400">
    <property type="entry name" value="WD40"/>
    <property type="match status" value="4"/>
</dbReference>
<dbReference type="PRINTS" id="PR00320">
    <property type="entry name" value="GPROTEINBRPT"/>
</dbReference>
<dbReference type="SMART" id="SM00320">
    <property type="entry name" value="WD40"/>
    <property type="match status" value="5"/>
</dbReference>
<dbReference type="SUPFAM" id="SSF50978">
    <property type="entry name" value="WD40 repeat-like"/>
    <property type="match status" value="1"/>
</dbReference>
<dbReference type="PROSITE" id="PS50082">
    <property type="entry name" value="WD_REPEATS_2"/>
    <property type="match status" value="2"/>
</dbReference>
<dbReference type="PROSITE" id="PS50294">
    <property type="entry name" value="WD_REPEATS_REGION"/>
    <property type="match status" value="2"/>
</dbReference>
<keyword id="KW-0131">Cell cycle</keyword>
<keyword id="KW-0132">Cell division</keyword>
<keyword id="KW-0137">Centromere</keyword>
<keyword id="KW-0158">Chromosome</keyword>
<keyword id="KW-0159">Chromosome partition</keyword>
<keyword id="KW-0995">Kinetochore</keyword>
<keyword id="KW-0458">Lysosome</keyword>
<keyword id="KW-0472">Membrane</keyword>
<keyword id="KW-0498">Mitosis</keyword>
<keyword id="KW-0509">mRNA transport</keyword>
<keyword id="KW-0906">Nuclear pore complex</keyword>
<keyword id="KW-0539">Nucleus</keyword>
<keyword id="KW-0653">Protein transport</keyword>
<keyword id="KW-1185">Reference proteome</keyword>
<keyword id="KW-0677">Repeat</keyword>
<keyword id="KW-0811">Translocation</keyword>
<keyword id="KW-0813">Transport</keyword>
<keyword id="KW-0853">WD repeat</keyword>
<gene>
    <name type="primary">seh1l</name>
    <name type="ORF">TGas096l04.1</name>
</gene>
<organism>
    <name type="scientific">Xenopus tropicalis</name>
    <name type="common">Western clawed frog</name>
    <name type="synonym">Silurana tropicalis</name>
    <dbReference type="NCBI Taxonomy" id="8364"/>
    <lineage>
        <taxon>Eukaryota</taxon>
        <taxon>Metazoa</taxon>
        <taxon>Chordata</taxon>
        <taxon>Craniata</taxon>
        <taxon>Vertebrata</taxon>
        <taxon>Euteleostomi</taxon>
        <taxon>Amphibia</taxon>
        <taxon>Batrachia</taxon>
        <taxon>Anura</taxon>
        <taxon>Pipoidea</taxon>
        <taxon>Pipidae</taxon>
        <taxon>Xenopodinae</taxon>
        <taxon>Xenopus</taxon>
        <taxon>Silurana</taxon>
    </lineage>
</organism>
<feature type="chain" id="PRO_0000373810" description="Nucleoporin SEH1">
    <location>
        <begin position="1"/>
        <end position="360"/>
    </location>
</feature>
<feature type="repeat" description="WD 1">
    <location>
        <begin position="10"/>
        <end position="49"/>
    </location>
</feature>
<feature type="repeat" description="WD 2">
    <location>
        <begin position="55"/>
        <end position="96"/>
    </location>
</feature>
<feature type="repeat" description="WD 3">
    <location>
        <begin position="111"/>
        <end position="152"/>
    </location>
</feature>
<feature type="repeat" description="WD 4">
    <location>
        <begin position="160"/>
        <end position="210"/>
    </location>
</feature>
<feature type="repeat" description="WD 5">
    <location>
        <begin position="217"/>
        <end position="258"/>
    </location>
</feature>
<feature type="repeat" description="WD 6">
    <location>
        <begin position="276"/>
        <end position="315"/>
    </location>
</feature>
<sequence length="360" mass="39679">MFVARSIAADHKDLIHDVSFDFHGRRMATCSSDQSVKVWDKSENGDWHCTASWKTHSGSVWRVTWAHPEFGQVLASCSFDRTAAVWEEIVGESNDKLRGQSHWVKRTTLVDSRTSVTDVKFAPKHMGLMLATCSADGVVRIYEAPDVMNLSQWSLQHEISCKLSCSCISWNPSSSRAHSPMIAVGSDDSSPNIMGKVQIYEYNENTRKYAKAETLMSVSDPVHDIAFAPNLGRSFHILAVATKDVRIFTMKPLRKELSSSGGVTKFEIHTVAQFDNHNSQVWRVSWNITGTVLASSGDDGTVRLWKANYMDNWKCIGVLKGDGNPVGNSCQGIFGSSVGSAIQSLQNSVNGTSSSGRKHS</sequence>
<protein>
    <recommendedName>
        <fullName evidence="2">Nucleoporin SEH1</fullName>
    </recommendedName>
    <alternativeName>
        <fullName evidence="2">GATOR2 complex protein SEH1</fullName>
    </alternativeName>
    <alternativeName>
        <fullName>Nup107-160 subcomplex subunit seh1</fullName>
    </alternativeName>
</protein>
<comment type="function">
    <text evidence="1">Component of the Nup107-160 subcomplex of the nuclear pore complex (NPC). The Nup107-160 subcomplex is required for the assembly of a functional NPC. The Nup107-160 subcomplex is also required for normal kinetochore microtubule attachment, mitotic progression and chromosome segregation. This subunit plays a role in recruitment of the Nup107-160 subcomplex to the kinetochore.</text>
</comment>
<comment type="function">
    <text evidence="1">As a component of the GATOR2 complex, functions as an activator of the amino acid-sensing branch of the mTORC1 signaling pathway. The GATOR2 complex indirectly activates mTORC1 through the inhibition of the GATOR1 subcomplex. GATOR2 probably acts as an E3 ubiquitin-protein ligase toward GATOR1. In the presence of abundant amino acids, the GATOR2 complex mediates ubiquitination of the NPRL2 core component of the GATOR1 complex, leading to GATOR1 inactivation. In the absence of amino acids, GATOR2 is inhibited, activating the GATOR1 complex.</text>
</comment>
<comment type="activity regulation">
    <text evidence="1">The GATOR2 complex is negatively regulated by the upstream amino acid sensors CASTOR1 and SESN2, which sequester the GATOR2 complex in absence of amino acids. In the presence of abundant amino acids, GATOR2 is released from CASTOR1 and SESN2 and activated.</text>
</comment>
<comment type="subunit">
    <text evidence="1">Component of the Nup107-160 subcomplex of the nuclear pore complex (NPC). The Nup107-160 subcomplex includes NUP160, NUP133, NUP107, NUP98, NUP85, NUP43, NUP37, SEH1 and SEC13. Component of the GATOR2 subcomplex, composed of MIOS, SEC13, SEH1L, WDR24 and WDR59. The GATOR2 complex interacts with CASTOR1 and CASTOR2; the interaction is negatively regulated by arginine. The GATOR2 complex interacts with SESN1, SESN2 and SESN3; the interaction is negatively regulated by amino acids.</text>
</comment>
<comment type="subcellular location">
    <subcellularLocation>
        <location evidence="1">Chromosome</location>
        <location evidence="1">Centromere</location>
        <location evidence="1">Kinetochore</location>
    </subcellularLocation>
    <subcellularLocation>
        <location evidence="1">Nucleus</location>
        <location evidence="1">Nuclear pore complex</location>
    </subcellularLocation>
    <subcellularLocation>
        <location evidence="1">Lysosome membrane</location>
    </subcellularLocation>
</comment>
<comment type="similarity">
    <text evidence="2">Belongs to the WD repeat SEC13 family.</text>
</comment>
<name>SEH1_XENTR</name>
<reference key="1">
    <citation type="submission" date="2006-10" db="EMBL/GenBank/DDBJ databases">
        <authorList>
            <consortium name="Sanger Xenopus tropicalis EST/cDNA project"/>
        </authorList>
    </citation>
    <scope>NUCLEOTIDE SEQUENCE [LARGE SCALE MRNA]</scope>
    <source>
        <tissue>Gastrula</tissue>
    </source>
</reference>
<reference key="2">
    <citation type="submission" date="2004-10" db="EMBL/GenBank/DDBJ databases">
        <authorList>
            <consortium name="NIH - Xenopus Gene Collection (XGC) project"/>
        </authorList>
    </citation>
    <scope>NUCLEOTIDE SEQUENCE [LARGE SCALE MRNA]</scope>
    <source>
        <tissue>Embryo</tissue>
    </source>
</reference>
<proteinExistence type="evidence at transcript level"/>